<evidence type="ECO:0000250" key="1">
    <source>
        <dbReference type="UniProtKB" id="A4D1P6"/>
    </source>
</evidence>
<evidence type="ECO:0000250" key="2">
    <source>
        <dbReference type="UniProtKB" id="Q7TMQ7"/>
    </source>
</evidence>
<evidence type="ECO:0000255" key="3"/>
<evidence type="ECO:0000256" key="4">
    <source>
        <dbReference type="SAM" id="MobiDB-lite"/>
    </source>
</evidence>
<evidence type="ECO:0000305" key="5"/>
<evidence type="ECO:0000312" key="6">
    <source>
        <dbReference type="RGD" id="1306697"/>
    </source>
</evidence>
<keyword id="KW-0175">Coiled coil</keyword>
<keyword id="KW-0967">Endosome</keyword>
<keyword id="KW-0472">Membrane</keyword>
<keyword id="KW-0597">Phosphoprotein</keyword>
<keyword id="KW-1185">Reference proteome</keyword>
<keyword id="KW-0677">Repeat</keyword>
<keyword id="KW-0853">WD repeat</keyword>
<name>WDR91_RAT</name>
<feature type="chain" id="PRO_0000366949" description="WD repeat-containing protein 91">
    <location>
        <begin position="1"/>
        <end position="747"/>
    </location>
</feature>
<feature type="repeat" description="WD 1">
    <location>
        <begin position="406"/>
        <end position="445"/>
    </location>
</feature>
<feature type="repeat" description="WD 2">
    <location>
        <begin position="448"/>
        <end position="488"/>
    </location>
</feature>
<feature type="repeat" description="WD 3">
    <location>
        <begin position="511"/>
        <end position="555"/>
    </location>
</feature>
<feature type="repeat" description="WD 4">
    <location>
        <begin position="560"/>
        <end position="599"/>
    </location>
</feature>
<feature type="repeat" description="WD 5">
    <location>
        <begin position="602"/>
        <end position="641"/>
    </location>
</feature>
<feature type="repeat" description="WD 6">
    <location>
        <begin position="664"/>
        <end position="702"/>
    </location>
</feature>
<feature type="repeat" description="WD 7">
    <location>
        <begin position="709"/>
        <end position="747"/>
    </location>
</feature>
<feature type="region of interest" description="Disordered" evidence="4">
    <location>
        <begin position="265"/>
        <end position="358"/>
    </location>
</feature>
<feature type="coiled-coil region" evidence="3">
    <location>
        <begin position="183"/>
        <end position="227"/>
    </location>
</feature>
<feature type="compositionally biased region" description="Low complexity" evidence="4">
    <location>
        <begin position="265"/>
        <end position="278"/>
    </location>
</feature>
<feature type="compositionally biased region" description="Polar residues" evidence="4">
    <location>
        <begin position="283"/>
        <end position="299"/>
    </location>
</feature>
<feature type="compositionally biased region" description="Basic and acidic residues" evidence="4">
    <location>
        <begin position="332"/>
        <end position="343"/>
    </location>
</feature>
<feature type="compositionally biased region" description="Polar residues" evidence="4">
    <location>
        <begin position="344"/>
        <end position="353"/>
    </location>
</feature>
<feature type="modified residue" description="Phosphoserine" evidence="1">
    <location>
        <position position="256"/>
    </location>
</feature>
<feature type="modified residue" description="Phosphoserine" evidence="1">
    <location>
        <position position="288"/>
    </location>
</feature>
<proteinExistence type="evidence at transcript level"/>
<comment type="function">
    <text evidence="1 2">Functions as a negative regulator of the PI3 kinase/PI3K activity associated with endosomal membranes via BECN1, a core subunit of the PI3K complex. By modifying the phosphatidylinositol 3-phosphate/PtdInsP3 content of endosomal membranes may regulate endosome fusion, recycling, sorting and early to late endosome transport. It is for instance, required for the delivery of cargos like BST2/tetherin from early to late endosome and thereby participates indirectly to their degradation by the lysosome. May play a role in meiosis.</text>
</comment>
<comment type="subunit">
    <text evidence="1">Interacts with WDR81; involved in early to late endosome cargo transport. Interacts with BECN1; negatively regulates the PI3 kinase/PI3K activity associated with endosomal membranes.</text>
</comment>
<comment type="subcellular location">
    <subcellularLocation>
        <location evidence="1">Early endosome membrane</location>
        <topology evidence="1">Peripheral membrane protein</topology>
    </subcellularLocation>
    <subcellularLocation>
        <location evidence="1">Late endosome membrane</location>
    </subcellularLocation>
</comment>
<comment type="similarity">
    <text evidence="5">Belongs to the WD repeat WDR91 family.</text>
</comment>
<reference key="1">
    <citation type="journal article" date="2004" name="Genome Res.">
        <title>The status, quality, and expansion of the NIH full-length cDNA project: the Mammalian Gene Collection (MGC).</title>
        <authorList>
            <consortium name="The MGC Project Team"/>
        </authorList>
    </citation>
    <scope>NUCLEOTIDE SEQUENCE [LARGE SCALE MRNA]</scope>
    <source>
        <tissue>Prostate</tissue>
    </source>
</reference>
<accession>B2RYI0</accession>
<gene>
    <name evidence="6" type="primary">Wdr91</name>
</gene>
<organism>
    <name type="scientific">Rattus norvegicus</name>
    <name type="common">Rat</name>
    <dbReference type="NCBI Taxonomy" id="10116"/>
    <lineage>
        <taxon>Eukaryota</taxon>
        <taxon>Metazoa</taxon>
        <taxon>Chordata</taxon>
        <taxon>Craniata</taxon>
        <taxon>Vertebrata</taxon>
        <taxon>Euteleostomi</taxon>
        <taxon>Mammalia</taxon>
        <taxon>Eutheria</taxon>
        <taxon>Euarchontoglires</taxon>
        <taxon>Glires</taxon>
        <taxon>Rodentia</taxon>
        <taxon>Myomorpha</taxon>
        <taxon>Muroidea</taxon>
        <taxon>Muridae</taxon>
        <taxon>Murinae</taxon>
        <taxon>Rattus</taxon>
    </lineage>
</organism>
<protein>
    <recommendedName>
        <fullName evidence="6">WD repeat-containing protein 91</fullName>
    </recommendedName>
</protein>
<sequence>MAEAVERTDELVREYLLFRGFTHTLRQLDAEIKADKEKGFRVDKIVDQLQQLMQVYDLAALRDYWSYLERRLFSRLEDIYRPTINKLKTSLFRFYLVYTIQTNRNDKAQEFFAKQATELQNQAEWKDWFVLPFLPSPDTNPTFATYFSRQWADTFIISLHNFLSVLFQCMPVPVILNFDAECQRTNQVQEENEVLRQKLFALQAEVHRLKKEEQQQEEAAALVQHKLPPYVSSMDRLGDSELALVCSQRPASLSQSPRVGFLSSLLPQSKKSPSRLSPAQGPPQAQSSAKKDTFSSQATKGKDPVPGAKDGKSLLSGPVPGEASWTHQRQRRLQDHGKERRELLSTSSSQTQCAEKKLEGSGPEAELCLDLHMGPVEALARVSTAGSEGDRPEQPFIVLSQEEYGEHHSSIMHCRVDCSGRRVASLDVDGVIKVWSFNPIMQTKASSISKSPLLSLEWATKRDRLLLLGSGVGTVRLYDTEAKKNLCEININDDMPRILSLACSPNGASFVCSAAAPSLTSQPDSSAPDIGSKGMNQVPGKLLLWDTKTMKQQLQFSLDPEPIAINCTAFNHNGNLLVTGAADGVIRLFDMQQHGCAMSWKAHCGEVYSVEFSYDENAVNSIGEDGKFIQWNIHKSGLKVSEYSLPSDATGPFVLSGYSGYKQVQVPRGRLFAFDSEGNYMLTCSATGGLIYKLGSEEKVLENCLSLGGHRAPVVTVDWSTAMDCGTCLTASMDGKIKLTTLLAHKL</sequence>
<dbReference type="EMBL" id="BC166785">
    <property type="protein sequence ID" value="AAI66785.1"/>
    <property type="molecule type" value="mRNA"/>
</dbReference>
<dbReference type="RefSeq" id="NP_001120770.2">
    <property type="nucleotide sequence ID" value="NM_001127298.2"/>
</dbReference>
<dbReference type="SMR" id="B2RYI0"/>
<dbReference type="FunCoup" id="B2RYI0">
    <property type="interactions" value="1361"/>
</dbReference>
<dbReference type="IntAct" id="B2RYI0">
    <property type="interactions" value="4"/>
</dbReference>
<dbReference type="STRING" id="10116.ENSRNOP00000014010"/>
<dbReference type="iPTMnet" id="B2RYI0"/>
<dbReference type="PhosphoSitePlus" id="B2RYI0"/>
<dbReference type="jPOST" id="B2RYI0"/>
<dbReference type="PaxDb" id="10116-ENSRNOP00000014010"/>
<dbReference type="PeptideAtlas" id="B2RYI0"/>
<dbReference type="Ensembl" id="ENSRNOT00000014010.7">
    <property type="protein sequence ID" value="ENSRNOP00000014010.5"/>
    <property type="gene ID" value="ENSRNOG00000010421.7"/>
</dbReference>
<dbReference type="GeneID" id="312225"/>
<dbReference type="KEGG" id="rno:312225"/>
<dbReference type="UCSC" id="RGD:1306697">
    <property type="organism name" value="rat"/>
</dbReference>
<dbReference type="AGR" id="RGD:1306697"/>
<dbReference type="CTD" id="29062"/>
<dbReference type="RGD" id="1306697">
    <property type="gene designation" value="Wdr91"/>
</dbReference>
<dbReference type="eggNOG" id="KOG1333">
    <property type="taxonomic scope" value="Eukaryota"/>
</dbReference>
<dbReference type="GeneTree" id="ENSGT00390000001566"/>
<dbReference type="HOGENOM" id="CLU_022078_0_0_1"/>
<dbReference type="InParanoid" id="B2RYI0"/>
<dbReference type="OMA" id="KMYLVNA"/>
<dbReference type="OrthoDB" id="193023at2759"/>
<dbReference type="PhylomeDB" id="B2RYI0"/>
<dbReference type="TreeFam" id="TF317339"/>
<dbReference type="PRO" id="PR:B2RYI0"/>
<dbReference type="Proteomes" id="UP000002494">
    <property type="component" value="Chromosome 4"/>
</dbReference>
<dbReference type="Bgee" id="ENSRNOG00000010421">
    <property type="expression patterns" value="Expressed in spleen and 19 other cell types or tissues"/>
</dbReference>
<dbReference type="GO" id="GO:0005829">
    <property type="term" value="C:cytosol"/>
    <property type="evidence" value="ECO:0000250"/>
    <property type="project" value="UniProtKB"/>
</dbReference>
<dbReference type="GO" id="GO:0031901">
    <property type="term" value="C:early endosome membrane"/>
    <property type="evidence" value="ECO:0000250"/>
    <property type="project" value="UniProtKB"/>
</dbReference>
<dbReference type="GO" id="GO:0010008">
    <property type="term" value="C:endosome membrane"/>
    <property type="evidence" value="ECO:0000250"/>
    <property type="project" value="UniProtKB"/>
</dbReference>
<dbReference type="GO" id="GO:0031902">
    <property type="term" value="C:late endosome membrane"/>
    <property type="evidence" value="ECO:0000250"/>
    <property type="project" value="UniProtKB"/>
</dbReference>
<dbReference type="GO" id="GO:0141039">
    <property type="term" value="F:phosphatidylinositol 3-kinase inhibitor activity"/>
    <property type="evidence" value="ECO:0000250"/>
    <property type="project" value="UniProtKB"/>
</dbReference>
<dbReference type="GO" id="GO:0035014">
    <property type="term" value="F:phosphatidylinositol 3-kinase regulator activity"/>
    <property type="evidence" value="ECO:0000318"/>
    <property type="project" value="GO_Central"/>
</dbReference>
<dbReference type="GO" id="GO:0045022">
    <property type="term" value="P:early endosome to late endosome transport"/>
    <property type="evidence" value="ECO:0000250"/>
    <property type="project" value="UniProtKB"/>
</dbReference>
<dbReference type="GO" id="GO:0051898">
    <property type="term" value="P:negative regulation of phosphatidylinositol 3-kinase/protein kinase B signal transduction"/>
    <property type="evidence" value="ECO:0007669"/>
    <property type="project" value="InterPro"/>
</dbReference>
<dbReference type="GO" id="GO:0042176">
    <property type="term" value="P:regulation of protein catabolic process"/>
    <property type="evidence" value="ECO:0000266"/>
    <property type="project" value="RGD"/>
</dbReference>
<dbReference type="FunFam" id="2.130.10.10:FF:000276">
    <property type="entry name" value="WD repeat-containing protein 91"/>
    <property type="match status" value="1"/>
</dbReference>
<dbReference type="FunFam" id="2.130.10.10:FF:001230">
    <property type="entry name" value="WD repeat-containing protein 91"/>
    <property type="match status" value="1"/>
</dbReference>
<dbReference type="Gene3D" id="2.130.10.10">
    <property type="entry name" value="YVTN repeat-like/Quinoprotein amine dehydrogenase"/>
    <property type="match status" value="2"/>
</dbReference>
<dbReference type="InterPro" id="IPR056327">
    <property type="entry name" value="ARMC9_CTLH-like_dom"/>
</dbReference>
<dbReference type="InterPro" id="IPR015943">
    <property type="entry name" value="WD40/YVTN_repeat-like_dom_sf"/>
</dbReference>
<dbReference type="InterPro" id="IPR036322">
    <property type="entry name" value="WD40_repeat_dom_sf"/>
</dbReference>
<dbReference type="InterPro" id="IPR001680">
    <property type="entry name" value="WD40_rpt"/>
</dbReference>
<dbReference type="InterPro" id="IPR039724">
    <property type="entry name" value="WDR91"/>
</dbReference>
<dbReference type="PANTHER" id="PTHR13083">
    <property type="entry name" value="WD REPEAT-CONTAINING PROTEIN 91"/>
    <property type="match status" value="1"/>
</dbReference>
<dbReference type="PANTHER" id="PTHR13083:SF3">
    <property type="entry name" value="WD REPEAT-CONTAINING PROTEIN 91"/>
    <property type="match status" value="1"/>
</dbReference>
<dbReference type="Pfam" id="PF23138">
    <property type="entry name" value="CTLH_Armc9"/>
    <property type="match status" value="1"/>
</dbReference>
<dbReference type="Pfam" id="PF00400">
    <property type="entry name" value="WD40"/>
    <property type="match status" value="2"/>
</dbReference>
<dbReference type="SMART" id="SM00320">
    <property type="entry name" value="WD40"/>
    <property type="match status" value="5"/>
</dbReference>
<dbReference type="SUPFAM" id="SSF50978">
    <property type="entry name" value="WD40 repeat-like"/>
    <property type="match status" value="1"/>
</dbReference>
<dbReference type="PROSITE" id="PS50082">
    <property type="entry name" value="WD_REPEATS_2"/>
    <property type="match status" value="1"/>
</dbReference>
<dbReference type="PROSITE" id="PS50294">
    <property type="entry name" value="WD_REPEATS_REGION"/>
    <property type="match status" value="2"/>
</dbReference>